<comment type="function">
    <text evidence="1">Catalyzes the deamination of dCTP to dUTP.</text>
</comment>
<comment type="catalytic activity">
    <reaction evidence="1">
        <text>dCTP + H2O + H(+) = dUTP + NH4(+)</text>
        <dbReference type="Rhea" id="RHEA:22680"/>
        <dbReference type="ChEBI" id="CHEBI:15377"/>
        <dbReference type="ChEBI" id="CHEBI:15378"/>
        <dbReference type="ChEBI" id="CHEBI:28938"/>
        <dbReference type="ChEBI" id="CHEBI:61481"/>
        <dbReference type="ChEBI" id="CHEBI:61555"/>
        <dbReference type="EC" id="3.5.4.13"/>
    </reaction>
</comment>
<comment type="pathway">
    <text evidence="1">Pyrimidine metabolism; dUMP biosynthesis; dUMP from dCTP (dUTP route): step 1/2.</text>
</comment>
<comment type="subunit">
    <text evidence="1">Homotrimer.</text>
</comment>
<comment type="similarity">
    <text evidence="1">Belongs to the dCTP deaminase family.</text>
</comment>
<feature type="chain" id="PRO_1000009721" description="dCTP deaminase">
    <location>
        <begin position="1"/>
        <end position="193"/>
    </location>
</feature>
<feature type="region of interest" description="Disordered" evidence="2">
    <location>
        <begin position="169"/>
        <end position="193"/>
    </location>
</feature>
<feature type="active site" description="Proton donor/acceptor" evidence="1">
    <location>
        <position position="138"/>
    </location>
</feature>
<feature type="binding site" evidence="1">
    <location>
        <begin position="110"/>
        <end position="115"/>
    </location>
    <ligand>
        <name>dCTP</name>
        <dbReference type="ChEBI" id="CHEBI:61481"/>
    </ligand>
</feature>
<feature type="binding site" evidence="1">
    <location>
        <position position="128"/>
    </location>
    <ligand>
        <name>dCTP</name>
        <dbReference type="ChEBI" id="CHEBI:61481"/>
    </ligand>
</feature>
<feature type="binding site" evidence="1">
    <location>
        <begin position="136"/>
        <end position="138"/>
    </location>
    <ligand>
        <name>dCTP</name>
        <dbReference type="ChEBI" id="CHEBI:61481"/>
    </ligand>
</feature>
<feature type="binding site" evidence="1">
    <location>
        <position position="171"/>
    </location>
    <ligand>
        <name>dCTP</name>
        <dbReference type="ChEBI" id="CHEBI:61481"/>
    </ligand>
</feature>
<feature type="binding site" evidence="1">
    <location>
        <position position="178"/>
    </location>
    <ligand>
        <name>dCTP</name>
        <dbReference type="ChEBI" id="CHEBI:61481"/>
    </ligand>
</feature>
<feature type="binding site" evidence="1">
    <location>
        <position position="182"/>
    </location>
    <ligand>
        <name>dCTP</name>
        <dbReference type="ChEBI" id="CHEBI:61481"/>
    </ligand>
</feature>
<dbReference type="EC" id="3.5.4.13" evidence="1"/>
<dbReference type="EMBL" id="BX950851">
    <property type="protein sequence ID" value="CAG74322.1"/>
    <property type="molecule type" value="Genomic_DNA"/>
</dbReference>
<dbReference type="RefSeq" id="WP_011092996.1">
    <property type="nucleotide sequence ID" value="NC_004547.2"/>
</dbReference>
<dbReference type="SMR" id="Q6D7B3"/>
<dbReference type="STRING" id="218491.ECA1412"/>
<dbReference type="GeneID" id="57208227"/>
<dbReference type="KEGG" id="eca:ECA1412"/>
<dbReference type="PATRIC" id="fig|218491.5.peg.1448"/>
<dbReference type="eggNOG" id="COG0717">
    <property type="taxonomic scope" value="Bacteria"/>
</dbReference>
<dbReference type="HOGENOM" id="CLU_087476_2_0_6"/>
<dbReference type="OrthoDB" id="9780956at2"/>
<dbReference type="UniPathway" id="UPA00610">
    <property type="reaction ID" value="UER00665"/>
</dbReference>
<dbReference type="Proteomes" id="UP000007966">
    <property type="component" value="Chromosome"/>
</dbReference>
<dbReference type="GO" id="GO:0008829">
    <property type="term" value="F:dCTP deaminase activity"/>
    <property type="evidence" value="ECO:0007669"/>
    <property type="project" value="UniProtKB-UniRule"/>
</dbReference>
<dbReference type="GO" id="GO:0000166">
    <property type="term" value="F:nucleotide binding"/>
    <property type="evidence" value="ECO:0007669"/>
    <property type="project" value="UniProtKB-KW"/>
</dbReference>
<dbReference type="GO" id="GO:0006226">
    <property type="term" value="P:dUMP biosynthetic process"/>
    <property type="evidence" value="ECO:0007669"/>
    <property type="project" value="UniProtKB-UniPathway"/>
</dbReference>
<dbReference type="GO" id="GO:0006229">
    <property type="term" value="P:dUTP biosynthetic process"/>
    <property type="evidence" value="ECO:0007669"/>
    <property type="project" value="UniProtKB-UniRule"/>
</dbReference>
<dbReference type="GO" id="GO:0015949">
    <property type="term" value="P:nucleobase-containing small molecule interconversion"/>
    <property type="evidence" value="ECO:0007669"/>
    <property type="project" value="TreeGrafter"/>
</dbReference>
<dbReference type="CDD" id="cd07557">
    <property type="entry name" value="trimeric_dUTPase"/>
    <property type="match status" value="1"/>
</dbReference>
<dbReference type="FunFam" id="2.70.40.10:FF:000003">
    <property type="entry name" value="dCTP deaminase"/>
    <property type="match status" value="1"/>
</dbReference>
<dbReference type="Gene3D" id="2.70.40.10">
    <property type="match status" value="1"/>
</dbReference>
<dbReference type="HAMAP" id="MF_00146">
    <property type="entry name" value="dCTP_deaminase"/>
    <property type="match status" value="1"/>
</dbReference>
<dbReference type="InterPro" id="IPR011962">
    <property type="entry name" value="dCTP_deaminase"/>
</dbReference>
<dbReference type="InterPro" id="IPR036157">
    <property type="entry name" value="dUTPase-like_sf"/>
</dbReference>
<dbReference type="InterPro" id="IPR033704">
    <property type="entry name" value="dUTPase_trimeric"/>
</dbReference>
<dbReference type="NCBIfam" id="TIGR02274">
    <property type="entry name" value="dCTP_deam"/>
    <property type="match status" value="1"/>
</dbReference>
<dbReference type="PANTHER" id="PTHR42680">
    <property type="entry name" value="DCTP DEAMINASE"/>
    <property type="match status" value="1"/>
</dbReference>
<dbReference type="PANTHER" id="PTHR42680:SF3">
    <property type="entry name" value="DCTP DEAMINASE"/>
    <property type="match status" value="1"/>
</dbReference>
<dbReference type="Pfam" id="PF22769">
    <property type="entry name" value="DCD"/>
    <property type="match status" value="1"/>
</dbReference>
<dbReference type="SUPFAM" id="SSF51283">
    <property type="entry name" value="dUTPase-like"/>
    <property type="match status" value="1"/>
</dbReference>
<reference key="1">
    <citation type="journal article" date="2004" name="Proc. Natl. Acad. Sci. U.S.A.">
        <title>Genome sequence of the enterobacterial phytopathogen Erwinia carotovora subsp. atroseptica and characterization of virulence factors.</title>
        <authorList>
            <person name="Bell K.S."/>
            <person name="Sebaihia M."/>
            <person name="Pritchard L."/>
            <person name="Holden M.T.G."/>
            <person name="Hyman L.J."/>
            <person name="Holeva M.C."/>
            <person name="Thomson N.R."/>
            <person name="Bentley S.D."/>
            <person name="Churcher L.J.C."/>
            <person name="Mungall K."/>
            <person name="Atkin R."/>
            <person name="Bason N."/>
            <person name="Brooks K."/>
            <person name="Chillingworth T."/>
            <person name="Clark K."/>
            <person name="Doggett J."/>
            <person name="Fraser A."/>
            <person name="Hance Z."/>
            <person name="Hauser H."/>
            <person name="Jagels K."/>
            <person name="Moule S."/>
            <person name="Norbertczak H."/>
            <person name="Ormond D."/>
            <person name="Price C."/>
            <person name="Quail M.A."/>
            <person name="Sanders M."/>
            <person name="Walker D."/>
            <person name="Whitehead S."/>
            <person name="Salmond G.P.C."/>
            <person name="Birch P.R.J."/>
            <person name="Parkhill J."/>
            <person name="Toth I.K."/>
        </authorList>
    </citation>
    <scope>NUCLEOTIDE SEQUENCE [LARGE SCALE GENOMIC DNA]</scope>
    <source>
        <strain>SCRI 1043 / ATCC BAA-672</strain>
    </source>
</reference>
<keyword id="KW-0378">Hydrolase</keyword>
<keyword id="KW-0546">Nucleotide metabolism</keyword>
<keyword id="KW-0547">Nucleotide-binding</keyword>
<keyword id="KW-1185">Reference proteome</keyword>
<accession>Q6D7B3</accession>
<protein>
    <recommendedName>
        <fullName evidence="1">dCTP deaminase</fullName>
        <ecNumber evidence="1">3.5.4.13</ecNumber>
    </recommendedName>
    <alternativeName>
        <fullName evidence="1">Deoxycytidine triphosphate deaminase</fullName>
    </alternativeName>
</protein>
<sequence length="193" mass="21301">MRLCDRDIEAWLDDGRLVITPRPPTERISGATVDVRLGNQFRVFRGHTAAFIDLSGPKDEVSAALERVMSDEINLPEGEAFFLHPGELALAVTLESVTLPDNLVGWLDGRSSLARLGLMVHVTAHRIDPGWQGRIVLEFYNSGKLPLALRPGMMIGALSFEPLSGPAARPYNRRQDAKYKDQQGAVASRIDKD</sequence>
<name>DCD_PECAS</name>
<evidence type="ECO:0000255" key="1">
    <source>
        <dbReference type="HAMAP-Rule" id="MF_00146"/>
    </source>
</evidence>
<evidence type="ECO:0000256" key="2">
    <source>
        <dbReference type="SAM" id="MobiDB-lite"/>
    </source>
</evidence>
<gene>
    <name evidence="1" type="primary">dcd</name>
    <name type="ordered locus">ECA1412</name>
</gene>
<organism>
    <name type="scientific">Pectobacterium atrosepticum (strain SCRI 1043 / ATCC BAA-672)</name>
    <name type="common">Erwinia carotovora subsp. atroseptica</name>
    <dbReference type="NCBI Taxonomy" id="218491"/>
    <lineage>
        <taxon>Bacteria</taxon>
        <taxon>Pseudomonadati</taxon>
        <taxon>Pseudomonadota</taxon>
        <taxon>Gammaproteobacteria</taxon>
        <taxon>Enterobacterales</taxon>
        <taxon>Pectobacteriaceae</taxon>
        <taxon>Pectobacterium</taxon>
    </lineage>
</organism>
<proteinExistence type="inferred from homology"/>